<dbReference type="EMBL" id="CP000253">
    <property type="protein sequence ID" value="ABD31718.1"/>
    <property type="molecule type" value="Genomic_DNA"/>
</dbReference>
<dbReference type="RefSeq" id="WP_000783428.1">
    <property type="nucleotide sequence ID" value="NZ_LS483365.1"/>
</dbReference>
<dbReference type="RefSeq" id="YP_501172.1">
    <property type="nucleotide sequence ID" value="NC_007795.1"/>
</dbReference>
<dbReference type="SMR" id="Q2FVK1"/>
<dbReference type="STRING" id="93061.SAOUHSC_02710"/>
<dbReference type="PaxDb" id="1280-SAXN108_2677"/>
<dbReference type="GeneID" id="3919729"/>
<dbReference type="KEGG" id="sao:SAOUHSC_02710"/>
<dbReference type="PATRIC" id="fig|93061.5.peg.2454"/>
<dbReference type="eggNOG" id="ENOG50348U0">
    <property type="taxonomic scope" value="Bacteria"/>
</dbReference>
<dbReference type="HOGENOM" id="CLU_055394_0_1_9"/>
<dbReference type="OrthoDB" id="2413590at2"/>
<dbReference type="PRO" id="PR:Q2FVK1"/>
<dbReference type="Proteomes" id="UP000008816">
    <property type="component" value="Chromosome"/>
</dbReference>
<dbReference type="GO" id="GO:0005576">
    <property type="term" value="C:extracellular region"/>
    <property type="evidence" value="ECO:0007669"/>
    <property type="project" value="UniProtKB-SubCell"/>
</dbReference>
<dbReference type="GO" id="GO:0044165">
    <property type="term" value="C:host cell endoplasmic reticulum"/>
    <property type="evidence" value="ECO:0000305"/>
    <property type="project" value="UniProt"/>
</dbReference>
<dbReference type="GO" id="GO:0060090">
    <property type="term" value="F:molecular adaptor activity"/>
    <property type="evidence" value="ECO:0000314"/>
    <property type="project" value="UniProt"/>
</dbReference>
<dbReference type="GO" id="GO:0090729">
    <property type="term" value="F:toxin activity"/>
    <property type="evidence" value="ECO:0007669"/>
    <property type="project" value="UniProtKB-KW"/>
</dbReference>
<dbReference type="GO" id="GO:0051715">
    <property type="term" value="P:cytolysis in another organism"/>
    <property type="evidence" value="ECO:0007669"/>
    <property type="project" value="InterPro"/>
</dbReference>
<dbReference type="GO" id="GO:0085032">
    <property type="term" value="P:symbiont-mediated perturbation of host NF-kappaB cascade"/>
    <property type="evidence" value="ECO:0000314"/>
    <property type="project" value="UniProt"/>
</dbReference>
<dbReference type="Gene3D" id="2.70.240.10">
    <property type="entry name" value="Leukocidin/porin MspA"/>
    <property type="match status" value="1"/>
</dbReference>
<dbReference type="InterPro" id="IPR003963">
    <property type="entry name" value="Bi-component_toxin_staph"/>
</dbReference>
<dbReference type="InterPro" id="IPR016183">
    <property type="entry name" value="Leukocidin/Hemolysin_toxin"/>
</dbReference>
<dbReference type="InterPro" id="IPR036435">
    <property type="entry name" value="Leukocidin/porin_MspA_sf"/>
</dbReference>
<dbReference type="NCBIfam" id="TIGR01002">
    <property type="entry name" value="hlyII"/>
    <property type="match status" value="1"/>
</dbReference>
<dbReference type="Pfam" id="PF07968">
    <property type="entry name" value="Leukocidin"/>
    <property type="match status" value="1"/>
</dbReference>
<dbReference type="PRINTS" id="PR01468">
    <property type="entry name" value="BICOMPNTOXIN"/>
</dbReference>
<dbReference type="SUPFAM" id="SSF56959">
    <property type="entry name" value="Leukocidin-like"/>
    <property type="match status" value="1"/>
</dbReference>
<sequence length="325" mass="36711">MKMNKLVKSSVATSMALLLLSGTANAEGKITPVSVKKVDDKVTLYKTTATADSDKFKISQILTFNFIKDKSYDKDTLVLKATGNINSGFVKPNPNDYDFSKLYWGAKYNVSISSQSNDSVNVVDYAPKNQNEEFQVQNTLGYTFGGDISISNGLSGGLNGNTAFSETINYKQESYRTTLSRNTNYKNVGWGVEAHKIMNNGWGPYGRDSFHPTYGNELFLAGRQSSAYAGQNFIAQHQMPLLSRSNFNPEFLSVLSHRQDGAKKSKITVTYQREMDLYQIRWNGFYWAGANYKNFKTRTFKSTYEIDWENHKVKLLDTKETENNK</sequence>
<feature type="signal peptide" evidence="2">
    <location>
        <begin position="1"/>
        <end position="26"/>
    </location>
</feature>
<feature type="chain" id="PRO_0000414601" description="Gamma-hemolysin component B">
    <location>
        <begin position="27"/>
        <end position="325"/>
    </location>
</feature>
<evidence type="ECO:0000250" key="1"/>
<evidence type="ECO:0000255" key="2"/>
<evidence type="ECO:0000269" key="3">
    <source>
    </source>
</evidence>
<evidence type="ECO:0000269" key="4">
    <source>
    </source>
</evidence>
<evidence type="ECO:0000305" key="5"/>
<gene>
    <name type="primary">hlgB</name>
    <name type="ordered locus">SAOUHSC_02710</name>
</gene>
<proteinExistence type="evidence at protein level"/>
<name>HLGB_STAA8</name>
<comment type="function">
    <text evidence="4">Toxin that seems to act by forming pores in the membrane of the cell. Has a hemolytic and a leucotoxic activity. Promotes host AMFR-mediated inflammation by mediating 'Lys-27'-linked ubiquitination of TAB3, TAK1-TAB3 complex formation and phosphorylation of TAK1/MAP3K7 (PubMed:36593296). In turn, activates host NF-kappa-B signaling pathway.</text>
</comment>
<comment type="subunit">
    <text evidence="1 4">Toxicity requires sequential binding and synergistic association of a class S and a class F component which form heterooligomeric complexes. HlgB (class F) associates with either hlgA thus forming an AB toxin or with hlgC thus forming a CB toxin (By similarity). Interacts with host AMFR (PubMed:36593296).</text>
</comment>
<comment type="subcellular location">
    <subcellularLocation>
        <location evidence="3">Secreted</location>
    </subcellularLocation>
</comment>
<comment type="induction">
    <text evidence="3">Less protein is secreted in a secG mutant (at protein level).</text>
</comment>
<comment type="similarity">
    <text evidence="5">Belongs to the aerolysin family.</text>
</comment>
<reference key="1">
    <citation type="book" date="2006" name="Gram positive pathogens, 2nd edition">
        <title>The Staphylococcus aureus NCTC 8325 genome.</title>
        <editorList>
            <person name="Fischetti V."/>
            <person name="Novick R."/>
            <person name="Ferretti J."/>
            <person name="Portnoy D."/>
            <person name="Rood J."/>
        </editorList>
        <authorList>
            <person name="Gillaspy A.F."/>
            <person name="Worrell V."/>
            <person name="Orvis J."/>
            <person name="Roe B.A."/>
            <person name="Dyer D.W."/>
            <person name="Iandolo J.J."/>
        </authorList>
    </citation>
    <scope>NUCLEOTIDE SEQUENCE [LARGE SCALE GENOMIC DNA]</scope>
    <source>
        <strain>NCTC 8325 / PS 47</strain>
    </source>
</reference>
<reference key="2">
    <citation type="journal article" date="2010" name="J. Bacteriol.">
        <title>Synthetic effects of secG and secY2 mutations on exoproteome biogenesis in Staphylococcus aureus.</title>
        <authorList>
            <person name="Sibbald M.J."/>
            <person name="Winter T."/>
            <person name="van der Kooi-Pol M.M."/>
            <person name="Buist G."/>
            <person name="Tsompanidou E."/>
            <person name="Bosma T."/>
            <person name="Schafer T."/>
            <person name="Ohlsen K."/>
            <person name="Hecker M."/>
            <person name="Antelmann H."/>
            <person name="Engelmann S."/>
            <person name="van Dijl J.M."/>
        </authorList>
    </citation>
    <scope>IDENTIFICATION BY MASS SPECTROMETRY</scope>
    <scope>SUBCELLULAR LOCATION</scope>
    <scope>INDUCTION</scope>
    <source>
        <strain>RN4220</strain>
    </source>
</reference>
<reference key="3">
    <citation type="journal article" date="2023" name="Nat. Microbiol.">
        <title>Staphylococcal virulence factor HlgB targets the endoplasmic-reticulum-resident E3 ubiquitin ligase AMFR to promote pneumonia.</title>
        <authorList>
            <person name="Sun L."/>
            <person name="Zhang H."/>
            <person name="Zhang H."/>
            <person name="Lou X."/>
            <person name="Wang Z."/>
            <person name="Wu Y."/>
            <person name="Yang X."/>
            <person name="Chen D."/>
            <person name="Guo B."/>
            <person name="Zhang A."/>
            <person name="Qian F."/>
        </authorList>
    </citation>
    <scope>FUNCTION</scope>
    <scope>INTERACTION WITH HOST AMFR</scope>
</reference>
<protein>
    <recommendedName>
        <fullName>Gamma-hemolysin component B</fullName>
    </recommendedName>
    <alternativeName>
        <fullName>H-gamma-1</fullName>
    </alternativeName>
    <alternativeName>
        <fullName>H-gamma-I</fullName>
    </alternativeName>
    <alternativeName>
        <fullName>Leukocidin f subunit</fullName>
    </alternativeName>
</protein>
<keyword id="KW-0204">Cytolysis</keyword>
<keyword id="KW-0354">Hemolysis</keyword>
<keyword id="KW-1185">Reference proteome</keyword>
<keyword id="KW-0964">Secreted</keyword>
<keyword id="KW-0732">Signal</keyword>
<keyword id="KW-0800">Toxin</keyword>
<keyword id="KW-0843">Virulence</keyword>
<organism>
    <name type="scientific">Staphylococcus aureus (strain NCTC 8325 / PS 47)</name>
    <dbReference type="NCBI Taxonomy" id="93061"/>
    <lineage>
        <taxon>Bacteria</taxon>
        <taxon>Bacillati</taxon>
        <taxon>Bacillota</taxon>
        <taxon>Bacilli</taxon>
        <taxon>Bacillales</taxon>
        <taxon>Staphylococcaceae</taxon>
        <taxon>Staphylococcus</taxon>
    </lineage>
</organism>
<accession>Q2FVK1</accession>